<evidence type="ECO:0000255" key="1"/>
<evidence type="ECO:0000305" key="2"/>
<dbReference type="EC" id="7.1.1.9"/>
<dbReference type="EMBL" id="M94110">
    <property type="protein sequence ID" value="AAA22367.1"/>
    <property type="molecule type" value="Genomic_DNA"/>
</dbReference>
<dbReference type="EMBL" id="CP001878">
    <property type="protein sequence ID" value="ADC48249.1"/>
    <property type="molecule type" value="Genomic_DNA"/>
</dbReference>
<dbReference type="RefSeq" id="WP_012959531.1">
    <property type="nucleotide sequence ID" value="NC_013791.2"/>
</dbReference>
<dbReference type="SMR" id="Q04452"/>
<dbReference type="STRING" id="398511.BpOF4_00900"/>
<dbReference type="KEGG" id="bpf:BpOF4_00900"/>
<dbReference type="eggNOG" id="COG3125">
    <property type="taxonomic scope" value="Bacteria"/>
</dbReference>
<dbReference type="HOGENOM" id="CLU_140945_3_0_9"/>
<dbReference type="Proteomes" id="UP000001544">
    <property type="component" value="Chromosome"/>
</dbReference>
<dbReference type="GO" id="GO:0009319">
    <property type="term" value="C:cytochrome o ubiquinol oxidase complex"/>
    <property type="evidence" value="ECO:0007669"/>
    <property type="project" value="TreeGrafter"/>
</dbReference>
<dbReference type="GO" id="GO:0005886">
    <property type="term" value="C:plasma membrane"/>
    <property type="evidence" value="ECO:0007669"/>
    <property type="project" value="UniProtKB-SubCell"/>
</dbReference>
<dbReference type="GO" id="GO:0009486">
    <property type="term" value="F:cytochrome bo3 ubiquinol oxidase activity"/>
    <property type="evidence" value="ECO:0007669"/>
    <property type="project" value="TreeGrafter"/>
</dbReference>
<dbReference type="GO" id="GO:0004129">
    <property type="term" value="F:cytochrome-c oxidase activity"/>
    <property type="evidence" value="ECO:0007669"/>
    <property type="project" value="UniProtKB-EC"/>
</dbReference>
<dbReference type="GO" id="GO:0019646">
    <property type="term" value="P:aerobic electron transport chain"/>
    <property type="evidence" value="ECO:0007669"/>
    <property type="project" value="TreeGrafter"/>
</dbReference>
<dbReference type="GO" id="GO:0015990">
    <property type="term" value="P:electron transport coupled proton transport"/>
    <property type="evidence" value="ECO:0007669"/>
    <property type="project" value="TreeGrafter"/>
</dbReference>
<dbReference type="InterPro" id="IPR005171">
    <property type="entry name" value="Cyt_c_oxidase_su4_prok"/>
</dbReference>
<dbReference type="InterPro" id="IPR050968">
    <property type="entry name" value="Cytochrome_c_oxidase_bac_sub4"/>
</dbReference>
<dbReference type="PANTHER" id="PTHR36835">
    <property type="entry name" value="CYTOCHROME BO(3) UBIQUINOL OXIDASE SUBUNIT 4"/>
    <property type="match status" value="1"/>
</dbReference>
<dbReference type="PANTHER" id="PTHR36835:SF1">
    <property type="entry name" value="CYTOCHROME BO(3) UBIQUINOL OXIDASE SUBUNIT 4"/>
    <property type="match status" value="1"/>
</dbReference>
<dbReference type="Pfam" id="PF03626">
    <property type="entry name" value="COX4_pro"/>
    <property type="match status" value="1"/>
</dbReference>
<reference key="1">
    <citation type="journal article" date="1993" name="J. Biol. Chem.">
        <title>Cloning of the cta operon from alkaliphilic Bacillus firmus OF4 and characterization of the pH-regulated cytochrome caa3 oxidase it encodes.</title>
        <authorList>
            <person name="Quirk P.G."/>
            <person name="Hicks D.B."/>
            <person name="Krulwich T.A."/>
        </authorList>
    </citation>
    <scope>NUCLEOTIDE SEQUENCE [GENOMIC DNA]</scope>
</reference>
<reference key="2">
    <citation type="journal article" date="2011" name="Environ. Microbiol.">
        <title>Genome of alkaliphilic Bacillus pseudofirmus OF4 reveals adaptations that support the ability to grow in an external pH range from 7.5 to 11.4.</title>
        <authorList>
            <person name="Janto B."/>
            <person name="Ahmed A."/>
            <person name="Ito M."/>
            <person name="Liu J."/>
            <person name="Hicks D.B."/>
            <person name="Pagni S."/>
            <person name="Fackelmayer O.J."/>
            <person name="Smith T.A."/>
            <person name="Earl J."/>
            <person name="Elbourne L.D."/>
            <person name="Hassan K."/>
            <person name="Paulsen I.T."/>
            <person name="Kolsto A.B."/>
            <person name="Tourasse N.J."/>
            <person name="Ehrlich G.D."/>
            <person name="Boissy R."/>
            <person name="Ivey D.M."/>
            <person name="Li G."/>
            <person name="Xue Y."/>
            <person name="Ma Y."/>
            <person name="Hu F.Z."/>
            <person name="Krulwich T.A."/>
        </authorList>
    </citation>
    <scope>NUCLEOTIDE SEQUENCE [LARGE SCALE GENOMIC DNA]</scope>
    <source>
        <strain>ATCC BAA-2126 / JCM 17055 / OF4</strain>
    </source>
</reference>
<keyword id="KW-1003">Cell membrane</keyword>
<keyword id="KW-0472">Membrane</keyword>
<keyword id="KW-1185">Reference proteome</keyword>
<keyword id="KW-1278">Translocase</keyword>
<keyword id="KW-0812">Transmembrane</keyword>
<keyword id="KW-1133">Transmembrane helix</keyword>
<feature type="chain" id="PRO_0000183900" description="Cytochrome c oxidase subunit 4B">
    <location>
        <begin position="1"/>
        <end position="114"/>
    </location>
</feature>
<feature type="transmembrane region" description="Helical" evidence="1">
    <location>
        <begin position="29"/>
        <end position="49"/>
    </location>
</feature>
<feature type="transmembrane region" description="Helical" evidence="1">
    <location>
        <begin position="56"/>
        <end position="76"/>
    </location>
</feature>
<feature type="transmembrane region" description="Helical" evidence="1">
    <location>
        <begin position="89"/>
        <end position="109"/>
    </location>
</feature>
<feature type="sequence conflict" description="In Ref. 1; AAA22367." evidence="2" ref="1">
    <original>V</original>
    <variation>A</variation>
    <location>
        <position position="32"/>
    </location>
</feature>
<accession>Q04452</accession>
<accession>D3FU47</accession>
<organism>
    <name type="scientific">Alkalihalophilus pseudofirmus (strain ATCC BAA-2126 / JCM 17055 / OF4)</name>
    <name type="common">Bacillus pseudofirmus</name>
    <dbReference type="NCBI Taxonomy" id="398511"/>
    <lineage>
        <taxon>Bacteria</taxon>
        <taxon>Bacillati</taxon>
        <taxon>Bacillota</taxon>
        <taxon>Bacilli</taxon>
        <taxon>Bacillales</taxon>
        <taxon>Bacillaceae</taxon>
        <taxon>Alkalihalophilus</taxon>
    </lineage>
</organism>
<gene>
    <name type="primary">ctaF</name>
    <name type="ordered locus">BpOF4_00900</name>
</gene>
<protein>
    <recommendedName>
        <fullName>Cytochrome c oxidase subunit 4B</fullName>
        <ecNumber>7.1.1.9</ecNumber>
    </recommendedName>
    <alternativeName>
        <fullName>Cytochrome aa3 subunit 4B</fullName>
    </alternativeName>
    <alternativeName>
        <fullName>Cytochrome c oxidase polypeptide IVB</fullName>
    </alternativeName>
</protein>
<sequence length="114" mass="13045">MADNLSQSFDKSAMTEEERRHIKKEIRKQIVVFALMIFLTLMSFMAVATDVIPRSFAIPFIFILAVIQFALQLFFFMHMKDKDHGWANAFMISGIFITVPTIAALMLLLGVNKI</sequence>
<proteinExistence type="inferred from homology"/>
<name>COX4_ALKPO</name>
<comment type="catalytic activity">
    <reaction>
        <text>4 Fe(II)-[cytochrome c] + O2 + 8 H(+)(in) = 4 Fe(III)-[cytochrome c] + 2 H2O + 4 H(+)(out)</text>
        <dbReference type="Rhea" id="RHEA:11436"/>
        <dbReference type="Rhea" id="RHEA-COMP:10350"/>
        <dbReference type="Rhea" id="RHEA-COMP:14399"/>
        <dbReference type="ChEBI" id="CHEBI:15377"/>
        <dbReference type="ChEBI" id="CHEBI:15378"/>
        <dbReference type="ChEBI" id="CHEBI:15379"/>
        <dbReference type="ChEBI" id="CHEBI:29033"/>
        <dbReference type="ChEBI" id="CHEBI:29034"/>
        <dbReference type="EC" id="7.1.1.9"/>
    </reaction>
</comment>
<comment type="subcellular location">
    <subcellularLocation>
        <location>Cell membrane</location>
        <topology>Multi-pass membrane protein</topology>
    </subcellularLocation>
</comment>
<comment type="similarity">
    <text evidence="2">Belongs to the cytochrome c oxidase bacterial subunit 4 family.</text>
</comment>